<name>CP19A_BOVIN</name>
<feature type="chain" id="PRO_0000051950" description="Aromatase">
    <location>
        <begin position="1"/>
        <end position="503"/>
    </location>
</feature>
<feature type="transmembrane region" description="Helical" evidence="3">
    <location>
        <begin position="19"/>
        <end position="39"/>
    </location>
</feature>
<feature type="transmembrane region" description="Helical" evidence="3">
    <location>
        <begin position="53"/>
        <end position="73"/>
    </location>
</feature>
<feature type="binding site" evidence="1">
    <location>
        <position position="309"/>
    </location>
    <ligand>
        <name>substrate</name>
    </ligand>
</feature>
<feature type="binding site" evidence="1">
    <location>
        <position position="374"/>
    </location>
    <ligand>
        <name>substrate</name>
    </ligand>
</feature>
<feature type="binding site" description="axial binding residue" evidence="1">
    <location>
        <position position="437"/>
    </location>
    <ligand>
        <name>heme</name>
        <dbReference type="ChEBI" id="CHEBI:30413"/>
    </ligand>
    <ligandPart>
        <name>Fe</name>
        <dbReference type="ChEBI" id="CHEBI:18248"/>
    </ligandPart>
</feature>
<feature type="sequence conflict" description="In Ref. 1; AAA62244." evidence="5" ref="1">
    <original>K</original>
    <variation>N</variation>
    <location>
        <position position="216"/>
    </location>
</feature>
<feature type="sequence conflict" description="In Ref. 1; AAA62244." evidence="5" ref="1">
    <original>E</original>
    <variation>A</variation>
    <location>
        <position position="260"/>
    </location>
</feature>
<feature type="sequence conflict" description="In Ref. 1; AAA62244." evidence="5" ref="1">
    <original>A</original>
    <variation>G</variation>
    <location>
        <position position="436"/>
    </location>
</feature>
<feature type="sequence conflict" description="In Ref. 1; AAA62244." evidence="5" ref="1">
    <original>T</original>
    <variation>A</variation>
    <location>
        <position position="443"/>
    </location>
</feature>
<evidence type="ECO:0000250" key="1"/>
<evidence type="ECO:0000250" key="2">
    <source>
        <dbReference type="UniProtKB" id="P11511"/>
    </source>
</evidence>
<evidence type="ECO:0000255" key="3"/>
<evidence type="ECO:0000303" key="4">
    <source>
    </source>
</evidence>
<evidence type="ECO:0000305" key="5"/>
<proteinExistence type="evidence at transcript level"/>
<organism>
    <name type="scientific">Bos taurus</name>
    <name type="common">Bovine</name>
    <dbReference type="NCBI Taxonomy" id="9913"/>
    <lineage>
        <taxon>Eukaryota</taxon>
        <taxon>Metazoa</taxon>
        <taxon>Chordata</taxon>
        <taxon>Craniata</taxon>
        <taxon>Vertebrata</taxon>
        <taxon>Euteleostomi</taxon>
        <taxon>Mammalia</taxon>
        <taxon>Eutheria</taxon>
        <taxon>Laurasiatheria</taxon>
        <taxon>Artiodactyla</taxon>
        <taxon>Ruminantia</taxon>
        <taxon>Pecora</taxon>
        <taxon>Bovidae</taxon>
        <taxon>Bovinae</taxon>
        <taxon>Bos</taxon>
    </lineage>
</organism>
<gene>
    <name type="primary">CYP19A1</name>
    <name type="synonym">CYP19</name>
</gene>
<comment type="function">
    <text evidence="2">A cytochrome P450 monooxygenase that catalyzes the conversion of C19 androgens, androst-4-ene-3,17-dione (androstenedione) and testosterone to the C18 estrogens, estrone and estradiol, respectively. Catalyzes three successive oxidations of C19 androgens: two conventional oxidations at C19 yielding 19-hydroxy and 19-oxo/19-aldehyde derivatives, followed by a third oxidative aromatization step that involves C1-beta hydrogen abstraction combined with cleavage of the C10-C19 bond to yield a phenolic A ring and formic acid. Alternatively, the third oxidative reaction yields a 19-norsteroid and formic acid. Converts dihydrotestosterone to delta1,10-dehydro 19-nordihydrotestosterone and may play a role in homeostasis of this potent androgen. Also displays 2-hydroxylase activity toward estrone. Mechanistically, uses molecular oxygen inserting one oxygen atom into a substrate, and reducing the second into a water molecule, with two electrons provided by NADPH via cytochrome P450 reductase (CPR; NADPH-ferrihemoprotein reductase).</text>
</comment>
<comment type="catalytic activity">
    <reaction evidence="2">
        <text>testosterone + 3 reduced [NADPH--hemoprotein reductase] + 3 O2 = 17beta-estradiol + formate + 3 oxidized [NADPH--hemoprotein reductase] + 4 H2O + 4 H(+)</text>
        <dbReference type="Rhea" id="RHEA:38191"/>
        <dbReference type="Rhea" id="RHEA-COMP:11964"/>
        <dbReference type="Rhea" id="RHEA-COMP:11965"/>
        <dbReference type="ChEBI" id="CHEBI:15377"/>
        <dbReference type="ChEBI" id="CHEBI:15378"/>
        <dbReference type="ChEBI" id="CHEBI:15379"/>
        <dbReference type="ChEBI" id="CHEBI:15740"/>
        <dbReference type="ChEBI" id="CHEBI:16469"/>
        <dbReference type="ChEBI" id="CHEBI:17347"/>
        <dbReference type="ChEBI" id="CHEBI:57618"/>
        <dbReference type="ChEBI" id="CHEBI:58210"/>
        <dbReference type="EC" id="1.14.14.14"/>
    </reaction>
    <physiologicalReaction direction="left-to-right" evidence="2">
        <dbReference type="Rhea" id="RHEA:38192"/>
    </physiologicalReaction>
</comment>
<comment type="catalytic activity">
    <reaction evidence="2">
        <text>androst-4-ene-3,17-dione + 3 reduced [NADPH--hemoprotein reductase] + 3 O2 = estrone + formate + 3 oxidized [NADPH--hemoprotein reductase] + 4 H2O + 4 H(+)</text>
        <dbReference type="Rhea" id="RHEA:38195"/>
        <dbReference type="Rhea" id="RHEA-COMP:11964"/>
        <dbReference type="Rhea" id="RHEA-COMP:11965"/>
        <dbReference type="ChEBI" id="CHEBI:15377"/>
        <dbReference type="ChEBI" id="CHEBI:15378"/>
        <dbReference type="ChEBI" id="CHEBI:15379"/>
        <dbReference type="ChEBI" id="CHEBI:15740"/>
        <dbReference type="ChEBI" id="CHEBI:16422"/>
        <dbReference type="ChEBI" id="CHEBI:17263"/>
        <dbReference type="ChEBI" id="CHEBI:57618"/>
        <dbReference type="ChEBI" id="CHEBI:58210"/>
        <dbReference type="EC" id="1.14.14.14"/>
    </reaction>
    <physiologicalReaction direction="left-to-right" evidence="2">
        <dbReference type="Rhea" id="RHEA:38196"/>
    </physiologicalReaction>
</comment>
<comment type="catalytic activity">
    <reaction evidence="2">
        <text>androst-4-ene-3,17-dione + reduced [NADPH--hemoprotein reductase] + O2 = 19-hydroxyandrost-4-ene-3,17-dione + oxidized [NADPH--hemoprotein reductase] + H2O + H(+)</text>
        <dbReference type="Rhea" id="RHEA:38199"/>
        <dbReference type="Rhea" id="RHEA-COMP:11964"/>
        <dbReference type="Rhea" id="RHEA-COMP:11965"/>
        <dbReference type="ChEBI" id="CHEBI:15377"/>
        <dbReference type="ChEBI" id="CHEBI:15378"/>
        <dbReference type="ChEBI" id="CHEBI:15379"/>
        <dbReference type="ChEBI" id="CHEBI:16422"/>
        <dbReference type="ChEBI" id="CHEBI:27576"/>
        <dbReference type="ChEBI" id="CHEBI:57618"/>
        <dbReference type="ChEBI" id="CHEBI:58210"/>
    </reaction>
    <physiologicalReaction direction="left-to-right" evidence="2">
        <dbReference type="Rhea" id="RHEA:38200"/>
    </physiologicalReaction>
</comment>
<comment type="catalytic activity">
    <reaction evidence="2">
        <text>19-hydroxyandrost-4-ene-3,17-dione + reduced [NADPH--hemoprotein reductase] + O2 = 19-oxo-androst-4-ene-3,17-dione + oxidized [NADPH--hemoprotein reductase] + 2 H2O + H(+)</text>
        <dbReference type="Rhea" id="RHEA:38203"/>
        <dbReference type="Rhea" id="RHEA-COMP:11964"/>
        <dbReference type="Rhea" id="RHEA-COMP:11965"/>
        <dbReference type="ChEBI" id="CHEBI:799"/>
        <dbReference type="ChEBI" id="CHEBI:15377"/>
        <dbReference type="ChEBI" id="CHEBI:15378"/>
        <dbReference type="ChEBI" id="CHEBI:15379"/>
        <dbReference type="ChEBI" id="CHEBI:27576"/>
        <dbReference type="ChEBI" id="CHEBI:57618"/>
        <dbReference type="ChEBI" id="CHEBI:58210"/>
    </reaction>
    <physiologicalReaction direction="left-to-right" evidence="2">
        <dbReference type="Rhea" id="RHEA:38204"/>
    </physiologicalReaction>
</comment>
<comment type="catalytic activity">
    <reaction evidence="2">
        <text>19-oxo-androst-4-ene-3,17-dione + reduced [NADPH--hemoprotein reductase] + O2 = estrone + formate + oxidized [NADPH--hemoprotein reductase] + H2O + 2 H(+)</text>
        <dbReference type="Rhea" id="RHEA:38207"/>
        <dbReference type="Rhea" id="RHEA-COMP:11964"/>
        <dbReference type="Rhea" id="RHEA-COMP:11965"/>
        <dbReference type="ChEBI" id="CHEBI:799"/>
        <dbReference type="ChEBI" id="CHEBI:15377"/>
        <dbReference type="ChEBI" id="CHEBI:15378"/>
        <dbReference type="ChEBI" id="CHEBI:15379"/>
        <dbReference type="ChEBI" id="CHEBI:15740"/>
        <dbReference type="ChEBI" id="CHEBI:17263"/>
        <dbReference type="ChEBI" id="CHEBI:57618"/>
        <dbReference type="ChEBI" id="CHEBI:58210"/>
    </reaction>
    <physiologicalReaction direction="left-to-right" evidence="2">
        <dbReference type="Rhea" id="RHEA:38208"/>
    </physiologicalReaction>
</comment>
<comment type="catalytic activity">
    <reaction evidence="2">
        <text>estrone + reduced [NADPH--hemoprotein reductase] + O2 = 2-hydroxyestrone + oxidized [NADPH--hemoprotein reductase] + H2O + H(+)</text>
        <dbReference type="Rhea" id="RHEA:47208"/>
        <dbReference type="Rhea" id="RHEA-COMP:11964"/>
        <dbReference type="Rhea" id="RHEA-COMP:11965"/>
        <dbReference type="ChEBI" id="CHEBI:1156"/>
        <dbReference type="ChEBI" id="CHEBI:15377"/>
        <dbReference type="ChEBI" id="CHEBI:15378"/>
        <dbReference type="ChEBI" id="CHEBI:15379"/>
        <dbReference type="ChEBI" id="CHEBI:17263"/>
        <dbReference type="ChEBI" id="CHEBI:57618"/>
        <dbReference type="ChEBI" id="CHEBI:58210"/>
    </reaction>
    <physiologicalReaction direction="left-to-right" evidence="2">
        <dbReference type="Rhea" id="RHEA:47209"/>
    </physiologicalReaction>
</comment>
<comment type="catalytic activity">
    <reaction evidence="2">
        <text>17beta-hydroxy-5alpha-androstan-3-one + reduced [NADPH--hemoprotein reductase] + O2 = 17beta,19-dihydroxy-3-oxo-5alpha-androstanone + oxidized [NADPH--hemoprotein reductase] + H2O + H(+)</text>
        <dbReference type="Rhea" id="RHEA:53200"/>
        <dbReference type="Rhea" id="RHEA-COMP:11964"/>
        <dbReference type="Rhea" id="RHEA-COMP:11965"/>
        <dbReference type="ChEBI" id="CHEBI:15377"/>
        <dbReference type="ChEBI" id="CHEBI:15378"/>
        <dbReference type="ChEBI" id="CHEBI:15379"/>
        <dbReference type="ChEBI" id="CHEBI:16330"/>
        <dbReference type="ChEBI" id="CHEBI:57618"/>
        <dbReference type="ChEBI" id="CHEBI:58210"/>
        <dbReference type="ChEBI" id="CHEBI:137031"/>
    </reaction>
    <physiologicalReaction direction="left-to-right" evidence="2">
        <dbReference type="Rhea" id="RHEA:53201"/>
    </physiologicalReaction>
</comment>
<comment type="catalytic activity">
    <reaction evidence="2">
        <text>17beta,19-dihydroxy-3-oxo-5alpha-androstanone + reduced [NADPH--hemoprotein reductase] + O2 = 17beta-hydroxy-3,19-dioxo-5alpha-androstanone + oxidized [NADPH--hemoprotein reductase] + 2 H2O + H(+)</text>
        <dbReference type="Rhea" id="RHEA:53204"/>
        <dbReference type="Rhea" id="RHEA-COMP:11964"/>
        <dbReference type="Rhea" id="RHEA-COMP:11965"/>
        <dbReference type="ChEBI" id="CHEBI:15377"/>
        <dbReference type="ChEBI" id="CHEBI:15378"/>
        <dbReference type="ChEBI" id="CHEBI:15379"/>
        <dbReference type="ChEBI" id="CHEBI:57618"/>
        <dbReference type="ChEBI" id="CHEBI:58210"/>
        <dbReference type="ChEBI" id="CHEBI:137031"/>
        <dbReference type="ChEBI" id="CHEBI:137032"/>
    </reaction>
    <physiologicalReaction direction="left-to-right" evidence="2">
        <dbReference type="Rhea" id="RHEA:53205"/>
    </physiologicalReaction>
</comment>
<comment type="catalytic activity">
    <reaction evidence="2">
        <text>17beta-hydroxy-3,19-dioxo-5alpha-androstanone + reduced [NADPH--hemoprotein reductase] + O2 = 17beta-hydroxy-3-oxo-19-nor-5alpha-androst-1-ene + formate + oxidized [NADPH--hemoprotein reductase] + H2O + 2 H(+)</text>
        <dbReference type="Rhea" id="RHEA:53276"/>
        <dbReference type="Rhea" id="RHEA-COMP:11964"/>
        <dbReference type="Rhea" id="RHEA-COMP:11965"/>
        <dbReference type="ChEBI" id="CHEBI:15377"/>
        <dbReference type="ChEBI" id="CHEBI:15378"/>
        <dbReference type="ChEBI" id="CHEBI:15379"/>
        <dbReference type="ChEBI" id="CHEBI:15740"/>
        <dbReference type="ChEBI" id="CHEBI:57618"/>
        <dbReference type="ChEBI" id="CHEBI:58210"/>
        <dbReference type="ChEBI" id="CHEBI:137032"/>
        <dbReference type="ChEBI" id="CHEBI:137110"/>
    </reaction>
    <physiologicalReaction direction="left-to-right" evidence="2">
        <dbReference type="Rhea" id="RHEA:53277"/>
    </physiologicalReaction>
</comment>
<comment type="cofactor">
    <cofactor evidence="2">
        <name>heme</name>
        <dbReference type="ChEBI" id="CHEBI:30413"/>
    </cofactor>
</comment>
<comment type="pathway">
    <text evidence="2">Steroid hormone biosynthesis.</text>
</comment>
<comment type="subcellular location">
    <subcellularLocation>
        <location evidence="2">Endoplasmic reticulum membrane</location>
        <topology evidence="5">Multi-pass membrane protein</topology>
    </subcellularLocation>
    <subcellularLocation>
        <location evidence="2">Microsome membrane</location>
        <topology evidence="5">Multi-pass membrane protein</topology>
    </subcellularLocation>
</comment>
<comment type="similarity">
    <text evidence="5">Belongs to the cytochrome P450 family.</text>
</comment>
<reference key="1">
    <citation type="journal article" date="1993" name="Endocrinology">
        <title>Isolation and characterization of a complementary deoxyribonucleic acid insert encoding bovine aromatase cytochrome P450.</title>
        <authorList>
            <person name="Hinshelwood M.M."/>
            <person name="Corbin C.J."/>
            <person name="Tsang P.C."/>
            <person name="Simpson E.R."/>
        </authorList>
    </citation>
    <scope>NUCLEOTIDE SEQUENCE [MRNA]</scope>
    <source>
        <tissue>Ovary</tissue>
    </source>
</reference>
<reference key="2">
    <citation type="journal article" date="1995" name="Gene">
        <title>Novel aromatase transcripts from bovine placenta contain repeated sequence motifs.</title>
        <authorList>
            <person name="Vanselow J."/>
            <person name="Furbass R."/>
        </authorList>
    </citation>
    <scope>NUCLEOTIDE SEQUENCE [MRNA]</scope>
    <source>
        <tissue>Placenta</tissue>
    </source>
</reference>
<reference key="3">
    <citation type="journal article" date="1997" name="Endocrinology">
        <title>Tissue-specific expression of the bovine aromatase-encoding gene uses multiple transcriptional start sites and alternative first exons.</title>
        <authorList>
            <person name="Furbass R."/>
            <person name="Kalbe C."/>
            <person name="Vanselow J."/>
        </authorList>
    </citation>
    <scope>NUCLEOTIDE SEQUENCE [GENOMIC DNA]</scope>
</reference>
<reference key="4">
    <citation type="submission" date="2000-10" db="EMBL/GenBank/DDBJ databases">
        <authorList>
            <person name="Furbass R."/>
        </authorList>
    </citation>
    <scope>SEQUENCE REVISION TO 443</scope>
</reference>
<dbReference type="EC" id="1.14.14.14" evidence="2"/>
<dbReference type="EMBL" id="U18447">
    <property type="protein sequence ID" value="AAA62244.1"/>
    <property type="molecule type" value="mRNA"/>
</dbReference>
<dbReference type="EMBL" id="Z32741">
    <property type="protein sequence ID" value="CAA83651.1"/>
    <property type="molecule type" value="mRNA"/>
</dbReference>
<dbReference type="EMBL" id="Z69242">
    <property type="protein sequence ID" value="CAC12940.1"/>
    <property type="molecule type" value="Genomic_DNA"/>
</dbReference>
<dbReference type="EMBL" id="Z69243">
    <property type="protein sequence ID" value="CAC12940.1"/>
    <property type="status" value="JOINED"/>
    <property type="molecule type" value="Genomic_DNA"/>
</dbReference>
<dbReference type="EMBL" id="Z69244">
    <property type="protein sequence ID" value="CAC12940.1"/>
    <property type="status" value="JOINED"/>
    <property type="molecule type" value="Genomic_DNA"/>
</dbReference>
<dbReference type="EMBL" id="Z69245">
    <property type="protein sequence ID" value="CAC12940.1"/>
    <property type="status" value="JOINED"/>
    <property type="molecule type" value="Genomic_DNA"/>
</dbReference>
<dbReference type="EMBL" id="Z69246">
    <property type="protein sequence ID" value="CAC12940.1"/>
    <property type="status" value="JOINED"/>
    <property type="molecule type" value="Genomic_DNA"/>
</dbReference>
<dbReference type="EMBL" id="Z69247">
    <property type="protein sequence ID" value="CAC12940.1"/>
    <property type="status" value="JOINED"/>
    <property type="molecule type" value="Genomic_DNA"/>
</dbReference>
<dbReference type="EMBL" id="Z69248">
    <property type="protein sequence ID" value="CAC12940.1"/>
    <property type="status" value="JOINED"/>
    <property type="molecule type" value="Genomic_DNA"/>
</dbReference>
<dbReference type="EMBL" id="Z69249">
    <property type="protein sequence ID" value="CAC12940.1"/>
    <property type="status" value="JOINED"/>
    <property type="molecule type" value="Genomic_DNA"/>
</dbReference>
<dbReference type="EMBL" id="Z69250">
    <property type="protein sequence ID" value="CAC12940.1"/>
    <property type="status" value="JOINED"/>
    <property type="molecule type" value="Genomic_DNA"/>
</dbReference>
<dbReference type="PIR" id="I46015">
    <property type="entry name" value="I46015"/>
</dbReference>
<dbReference type="RefSeq" id="NP_776730.1">
    <property type="nucleotide sequence ID" value="NM_174305.1"/>
</dbReference>
<dbReference type="SMR" id="P46194"/>
<dbReference type="FunCoup" id="P46194">
    <property type="interactions" value="8"/>
</dbReference>
<dbReference type="STRING" id="9913.ENSBTAP00000019823"/>
<dbReference type="PaxDb" id="9913-ENSBTAP00000019823"/>
<dbReference type="GeneID" id="281740"/>
<dbReference type="KEGG" id="bta:281740"/>
<dbReference type="CTD" id="1588"/>
<dbReference type="eggNOG" id="KOG0157">
    <property type="taxonomic scope" value="Eukaryota"/>
</dbReference>
<dbReference type="InParanoid" id="P46194"/>
<dbReference type="OrthoDB" id="1470350at2759"/>
<dbReference type="Proteomes" id="UP000009136">
    <property type="component" value="Unplaced"/>
</dbReference>
<dbReference type="GO" id="GO:0005783">
    <property type="term" value="C:endoplasmic reticulum"/>
    <property type="evidence" value="ECO:0000318"/>
    <property type="project" value="GO_Central"/>
</dbReference>
<dbReference type="GO" id="GO:0005789">
    <property type="term" value="C:endoplasmic reticulum membrane"/>
    <property type="evidence" value="ECO:0007669"/>
    <property type="project" value="UniProtKB-SubCell"/>
</dbReference>
<dbReference type="GO" id="GO:0070330">
    <property type="term" value="F:aromatase activity"/>
    <property type="evidence" value="ECO:0000250"/>
    <property type="project" value="UniProtKB"/>
</dbReference>
<dbReference type="GO" id="GO:0101021">
    <property type="term" value="F:estrogen 2-hydroxylase activity"/>
    <property type="evidence" value="ECO:0007669"/>
    <property type="project" value="RHEA"/>
</dbReference>
<dbReference type="GO" id="GO:0020037">
    <property type="term" value="F:heme binding"/>
    <property type="evidence" value="ECO:0000250"/>
    <property type="project" value="UniProtKB"/>
</dbReference>
<dbReference type="GO" id="GO:0005506">
    <property type="term" value="F:iron ion binding"/>
    <property type="evidence" value="ECO:0007669"/>
    <property type="project" value="InterPro"/>
</dbReference>
<dbReference type="GO" id="GO:0008585">
    <property type="term" value="P:female gonad development"/>
    <property type="evidence" value="ECO:0000318"/>
    <property type="project" value="GO_Central"/>
</dbReference>
<dbReference type="GO" id="GO:0006629">
    <property type="term" value="P:lipid metabolic process"/>
    <property type="evidence" value="ECO:0007669"/>
    <property type="project" value="UniProtKB-KW"/>
</dbReference>
<dbReference type="GO" id="GO:0032355">
    <property type="term" value="P:response to estradiol"/>
    <property type="evidence" value="ECO:0000318"/>
    <property type="project" value="GO_Central"/>
</dbReference>
<dbReference type="CDD" id="cd20616">
    <property type="entry name" value="CYP19A1"/>
    <property type="match status" value="1"/>
</dbReference>
<dbReference type="FunFam" id="1.10.630.10:FF:000032">
    <property type="entry name" value="Cytochrome P450 aromatase"/>
    <property type="match status" value="1"/>
</dbReference>
<dbReference type="Gene3D" id="1.10.630.10">
    <property type="entry name" value="Cytochrome P450"/>
    <property type="match status" value="1"/>
</dbReference>
<dbReference type="InterPro" id="IPR001128">
    <property type="entry name" value="Cyt_P450"/>
</dbReference>
<dbReference type="InterPro" id="IPR017972">
    <property type="entry name" value="Cyt_P450_CS"/>
</dbReference>
<dbReference type="InterPro" id="IPR002401">
    <property type="entry name" value="Cyt_P450_E_grp-I"/>
</dbReference>
<dbReference type="InterPro" id="IPR036396">
    <property type="entry name" value="Cyt_P450_sf"/>
</dbReference>
<dbReference type="InterPro" id="IPR050196">
    <property type="entry name" value="Cytochrome_P450_Monoox"/>
</dbReference>
<dbReference type="PANTHER" id="PTHR24291:SF43">
    <property type="entry name" value="AROMATASE"/>
    <property type="match status" value="1"/>
</dbReference>
<dbReference type="PANTHER" id="PTHR24291">
    <property type="entry name" value="CYTOCHROME P450 FAMILY 4"/>
    <property type="match status" value="1"/>
</dbReference>
<dbReference type="Pfam" id="PF00067">
    <property type="entry name" value="p450"/>
    <property type="match status" value="1"/>
</dbReference>
<dbReference type="PRINTS" id="PR00463">
    <property type="entry name" value="EP450I"/>
</dbReference>
<dbReference type="PRINTS" id="PR00385">
    <property type="entry name" value="P450"/>
</dbReference>
<dbReference type="SUPFAM" id="SSF48264">
    <property type="entry name" value="Cytochrome P450"/>
    <property type="match status" value="1"/>
</dbReference>
<dbReference type="PROSITE" id="PS00086">
    <property type="entry name" value="CYTOCHROME_P450"/>
    <property type="match status" value="1"/>
</dbReference>
<keyword id="KW-0256">Endoplasmic reticulum</keyword>
<keyword id="KW-0349">Heme</keyword>
<keyword id="KW-0408">Iron</keyword>
<keyword id="KW-0443">Lipid metabolism</keyword>
<keyword id="KW-0472">Membrane</keyword>
<keyword id="KW-0479">Metal-binding</keyword>
<keyword id="KW-0492">Microsome</keyword>
<keyword id="KW-0503">Monooxygenase</keyword>
<keyword id="KW-0560">Oxidoreductase</keyword>
<keyword id="KW-1185">Reference proteome</keyword>
<keyword id="KW-0812">Transmembrane</keyword>
<keyword id="KW-1133">Transmembrane helix</keyword>
<sequence>MLLEVLNPRHYNVTSMVSEVVPIASIAILLLTGFLLLVWNYEDTSSIPGPSYFLGIGPLISHCRFLWMGIGSACNYYNKMYGEFMRVWVCGEETLIISKSSSMFHVMKHSHYISRFGSKLGLQFIGMHEKGIIFNNNPALWKAVRPFFTKALSGPGLVRMVTICADSITKHLDRLEEVCNDLGYVDVLTLMRRIMLDTSNMLFLGIPLDESAIVVKIQGYFDAWQALLLKPDIFFKISWLCRKYEKSVKDLKDAMEILIEEKRHRISTAEKLEDSIDFATELIFAEKRGELTRENVNQCILEMLIAAPDTMSVSVFFMLFLIAKHPQVEEAIIREIQTVVGERDIRIDDMQKLKVVENFINESMRYQPVVDLVMRKALEDDVIDGYPVKKGTNIILNLGRMHRLEFFPKPNEFTLENFAKNVPYRYFQPFGFGPRACAGKYITMVMMKVVLVTLLRRFHVQTLQGRCVEKMQKKNDLSLHPDETRDRLEMIFTPRNSDKCLER</sequence>
<protein>
    <recommendedName>
        <fullName evidence="4">Aromatase</fullName>
        <ecNumber evidence="2">1.14.14.14</ecNumber>
    </recommendedName>
    <alternativeName>
        <fullName>CYPXIX</fullName>
    </alternativeName>
    <alternativeName>
        <fullName>Cytochrome P-450AROM</fullName>
    </alternativeName>
    <alternativeName>
        <fullName>Cytochrome P450 19A1</fullName>
    </alternativeName>
    <alternativeName>
        <fullName>Estrogen synthase</fullName>
    </alternativeName>
</protein>
<accession>P46194</accession>
<accession>Q29445</accession>
<accession>Q29453</accession>